<keyword id="KW-1185">Reference proteome</keyword>
<keyword id="KW-0677">Repeat</keyword>
<keyword id="KW-0808">Transferase</keyword>
<keyword id="KW-0833">Ubl conjugation pathway</keyword>
<feature type="chain" id="PRO_0000322183" description="U-box domain-containing protein 43">
    <location>
        <begin position="1"/>
        <end position="811"/>
    </location>
</feature>
<feature type="domain" description="U-box">
    <location>
        <begin position="24"/>
        <end position="103"/>
    </location>
</feature>
<feature type="repeat" description="ARM 1">
    <location>
        <begin position="136"/>
        <end position="175"/>
    </location>
</feature>
<feature type="repeat" description="ARM 2">
    <location>
        <begin position="178"/>
        <end position="217"/>
    </location>
</feature>
<feature type="repeat" description="ARM 3">
    <location>
        <begin position="220"/>
        <end position="261"/>
    </location>
</feature>
<feature type="repeat" description="ARM 4">
    <location>
        <begin position="263"/>
        <end position="302"/>
    </location>
</feature>
<feature type="repeat" description="ARM 5">
    <location>
        <begin position="303"/>
        <end position="342"/>
    </location>
</feature>
<feature type="repeat" description="ARM 6">
    <location>
        <begin position="344"/>
        <end position="388"/>
    </location>
</feature>
<feature type="repeat" description="ARM 7">
    <location>
        <begin position="399"/>
        <end position="438"/>
    </location>
</feature>
<feature type="repeat" description="ARM 8">
    <location>
        <begin position="444"/>
        <end position="484"/>
    </location>
</feature>
<feature type="repeat" description="ARM 9">
    <location>
        <begin position="489"/>
        <end position="528"/>
    </location>
</feature>
<comment type="function">
    <text evidence="1">Functions as an E3 ubiquitin ligase.</text>
</comment>
<comment type="catalytic activity">
    <reaction>
        <text>S-ubiquitinyl-[E2 ubiquitin-conjugating enzyme]-L-cysteine + [acceptor protein]-L-lysine = [E2 ubiquitin-conjugating enzyme]-L-cysteine + N(6)-ubiquitinyl-[acceptor protein]-L-lysine.</text>
        <dbReference type="EC" id="2.3.2.27"/>
    </reaction>
</comment>
<comment type="pathway">
    <text>Protein modification; protein ubiquitination.</text>
</comment>
<comment type="sequence caution" evidence="2">
    <conflict type="frameshift">
        <sequence resource="EMBL" id="AK226857"/>
    </conflict>
</comment>
<sequence>MAGSGSWDGSQSDNSSQFEPGIDNIYEAFICPLTKQVMHNPVTLENGQTFEREAIEKWFQECRENGQPLSCPITSKELSITDLSPSIALRNTIEEWRARNDALKLDIARQSLYLGNAETNILLALKNVREICRNIRKIRQRVCNPQLVRLITDMLKSSSHEVRCKALQTLQVVVEGDEESKAIVAEGDTVRTIVKFLSQEPSKGREAAVSVLFELSKSEALCEKIGSIHGAIILLVGLTSSKSENVSTVEKADKTLTNLERSEENVRQMAINGRLQPLLAKLLEGSPETKVSMAFYLGVLALNNDVKVIVAQTVGSSLIDLMRTRDMSQREAALGALNNISSFEGSAKLLINTGILPPLIKDLFYVGPNQLPIRLKEVSATILANIVNIGYDFDKVPVGPHHQTLVSEEIVENLLQLTSNTGPEIQGKLLAVLVGLTSCPNSVINVVSAIRNSAAIISLVQFVEIHENDDLRLASIKLLHNISPHMSEELANALRSTVGQLGSLVSIISENTPTITEEQAAAAGLLAELPERDLVLTMRLLREGAFEKIISKIVGIRQGEIRGIRFERTFLEGLVSILARITFALTKETDATLFCCEKNLPSLFLDLLQSNSQDNIQRASATALENLSLESKNLTKIPELPPPTYCVSIFSCLSKPPVVLGICKIHQGICSVRESFCLVEGQAVDKLVDLLDHENDKVVGPALAALSTLLEDGLDVVQGVRLIDEADGITPILNVLLENRTENLRIRAVWMVERILRIEEIAREVGEEQNVTAALVDAFQNADFRTRQIAEKALRHIDKIPNFSGIFTNIG</sequence>
<organism>
    <name type="scientific">Arabidopsis thaliana</name>
    <name type="common">Mouse-ear cress</name>
    <dbReference type="NCBI Taxonomy" id="3702"/>
    <lineage>
        <taxon>Eukaryota</taxon>
        <taxon>Viridiplantae</taxon>
        <taxon>Streptophyta</taxon>
        <taxon>Embryophyta</taxon>
        <taxon>Tracheophyta</taxon>
        <taxon>Spermatophyta</taxon>
        <taxon>Magnoliopsida</taxon>
        <taxon>eudicotyledons</taxon>
        <taxon>Gunneridae</taxon>
        <taxon>Pentapetalae</taxon>
        <taxon>rosids</taxon>
        <taxon>malvids</taxon>
        <taxon>Brassicales</taxon>
        <taxon>Brassicaceae</taxon>
        <taxon>Camelineae</taxon>
        <taxon>Arabidopsis</taxon>
    </lineage>
</organism>
<dbReference type="EC" id="2.3.2.27"/>
<dbReference type="EMBL" id="AC012394">
    <property type="protein sequence ID" value="AAF16662.1"/>
    <property type="molecule type" value="Genomic_DNA"/>
</dbReference>
<dbReference type="EMBL" id="CP002684">
    <property type="protein sequence ID" value="AEE35833.1"/>
    <property type="molecule type" value="Genomic_DNA"/>
</dbReference>
<dbReference type="EMBL" id="CP002684">
    <property type="protein sequence ID" value="AEE35834.1"/>
    <property type="molecule type" value="Genomic_DNA"/>
</dbReference>
<dbReference type="EMBL" id="AK226857">
    <property type="status" value="NOT_ANNOTATED_CDS"/>
    <property type="molecule type" value="mRNA"/>
</dbReference>
<dbReference type="PIR" id="E96791">
    <property type="entry name" value="E96791"/>
</dbReference>
<dbReference type="RefSeq" id="NP_001077833.1">
    <property type="nucleotide sequence ID" value="NM_001084364.2"/>
</dbReference>
<dbReference type="RefSeq" id="NP_177765.1">
    <property type="nucleotide sequence ID" value="NM_106288.4"/>
</dbReference>
<dbReference type="FunCoup" id="Q9SFX2">
    <property type="interactions" value="510"/>
</dbReference>
<dbReference type="STRING" id="3702.Q9SFX2"/>
<dbReference type="iPTMnet" id="Q9SFX2"/>
<dbReference type="PaxDb" id="3702-AT1G76390.2"/>
<dbReference type="ProteomicsDB" id="226249"/>
<dbReference type="EnsemblPlants" id="AT1G76390.1">
    <property type="protein sequence ID" value="AT1G76390.1"/>
    <property type="gene ID" value="AT1G76390"/>
</dbReference>
<dbReference type="EnsemblPlants" id="AT1G76390.2">
    <property type="protein sequence ID" value="AT1G76390.2"/>
    <property type="gene ID" value="AT1G76390"/>
</dbReference>
<dbReference type="GeneID" id="843971"/>
<dbReference type="Gramene" id="AT1G76390.1">
    <property type="protein sequence ID" value="AT1G76390.1"/>
    <property type="gene ID" value="AT1G76390"/>
</dbReference>
<dbReference type="Gramene" id="AT1G76390.2">
    <property type="protein sequence ID" value="AT1G76390.2"/>
    <property type="gene ID" value="AT1G76390"/>
</dbReference>
<dbReference type="KEGG" id="ath:AT1G76390"/>
<dbReference type="Araport" id="AT1G76390"/>
<dbReference type="TAIR" id="AT1G76390">
    <property type="gene designation" value="PUB43"/>
</dbReference>
<dbReference type="eggNOG" id="KOG0167">
    <property type="taxonomic scope" value="Eukaryota"/>
</dbReference>
<dbReference type="HOGENOM" id="CLU_004912_0_0_1"/>
<dbReference type="InParanoid" id="Q9SFX2"/>
<dbReference type="OMA" id="GICKIHQ"/>
<dbReference type="PhylomeDB" id="Q9SFX2"/>
<dbReference type="UniPathway" id="UPA00143"/>
<dbReference type="PRO" id="PR:Q9SFX2"/>
<dbReference type="Proteomes" id="UP000006548">
    <property type="component" value="Chromosome 1"/>
</dbReference>
<dbReference type="ExpressionAtlas" id="Q9SFX2">
    <property type="expression patterns" value="baseline and differential"/>
</dbReference>
<dbReference type="GO" id="GO:0005739">
    <property type="term" value="C:mitochondrion"/>
    <property type="evidence" value="ECO:0007005"/>
    <property type="project" value="TAIR"/>
</dbReference>
<dbReference type="GO" id="GO:0005886">
    <property type="term" value="C:plasma membrane"/>
    <property type="evidence" value="ECO:0007005"/>
    <property type="project" value="TAIR"/>
</dbReference>
<dbReference type="GO" id="GO:0004842">
    <property type="term" value="F:ubiquitin-protein transferase activity"/>
    <property type="evidence" value="ECO:0007669"/>
    <property type="project" value="InterPro"/>
</dbReference>
<dbReference type="GO" id="GO:0016567">
    <property type="term" value="P:protein ubiquitination"/>
    <property type="evidence" value="ECO:0007669"/>
    <property type="project" value="UniProtKB-UniPathway"/>
</dbReference>
<dbReference type="CDD" id="cd16664">
    <property type="entry name" value="RING-Ubox_PUB"/>
    <property type="match status" value="1"/>
</dbReference>
<dbReference type="FunFam" id="3.30.40.10:FF:001028">
    <property type="entry name" value="RING-type E3 ubiquitin transferase"/>
    <property type="match status" value="1"/>
</dbReference>
<dbReference type="Gene3D" id="1.25.10.10">
    <property type="entry name" value="Leucine-rich Repeat Variant"/>
    <property type="match status" value="3"/>
</dbReference>
<dbReference type="Gene3D" id="3.30.40.10">
    <property type="entry name" value="Zinc/RING finger domain, C3HC4 (zinc finger)"/>
    <property type="match status" value="1"/>
</dbReference>
<dbReference type="InterPro" id="IPR011989">
    <property type="entry name" value="ARM-like"/>
</dbReference>
<dbReference type="InterPro" id="IPR016024">
    <property type="entry name" value="ARM-type_fold"/>
</dbReference>
<dbReference type="InterPro" id="IPR000225">
    <property type="entry name" value="Armadillo"/>
</dbReference>
<dbReference type="InterPro" id="IPR045210">
    <property type="entry name" value="RING-Ubox_PUB"/>
</dbReference>
<dbReference type="InterPro" id="IPR052608">
    <property type="entry name" value="U-box_domain_protein"/>
</dbReference>
<dbReference type="InterPro" id="IPR003613">
    <property type="entry name" value="Ubox_domain"/>
</dbReference>
<dbReference type="InterPro" id="IPR013083">
    <property type="entry name" value="Znf_RING/FYVE/PHD"/>
</dbReference>
<dbReference type="PANTHER" id="PTHR45958">
    <property type="entry name" value="RING-TYPE E3 UBIQUITIN TRANSFERASE"/>
    <property type="match status" value="1"/>
</dbReference>
<dbReference type="PANTHER" id="PTHR45958:SF6">
    <property type="entry name" value="U-BOX DOMAIN-CONTAINING PROTEIN 43"/>
    <property type="match status" value="1"/>
</dbReference>
<dbReference type="Pfam" id="PF04564">
    <property type="entry name" value="U-box"/>
    <property type="match status" value="1"/>
</dbReference>
<dbReference type="SMART" id="SM00185">
    <property type="entry name" value="ARM"/>
    <property type="match status" value="8"/>
</dbReference>
<dbReference type="SMART" id="SM00504">
    <property type="entry name" value="Ubox"/>
    <property type="match status" value="1"/>
</dbReference>
<dbReference type="SUPFAM" id="SSF48371">
    <property type="entry name" value="ARM repeat"/>
    <property type="match status" value="2"/>
</dbReference>
<dbReference type="SUPFAM" id="SSF57850">
    <property type="entry name" value="RING/U-box"/>
    <property type="match status" value="1"/>
</dbReference>
<dbReference type="PROSITE" id="PS50176">
    <property type="entry name" value="ARM_REPEAT"/>
    <property type="match status" value="1"/>
</dbReference>
<dbReference type="PROSITE" id="PS51698">
    <property type="entry name" value="U_BOX"/>
    <property type="match status" value="1"/>
</dbReference>
<gene>
    <name type="primary">PUB43</name>
    <name type="ordered locus">At1g76390</name>
    <name type="ORF">F15M4.11</name>
</gene>
<accession>Q9SFX2</accession>
<proteinExistence type="evidence at transcript level"/>
<name>PUB43_ARATH</name>
<protein>
    <recommendedName>
        <fullName>U-box domain-containing protein 43</fullName>
        <ecNumber>2.3.2.27</ecNumber>
    </recommendedName>
    <alternativeName>
        <fullName>Plant U-box protein 43</fullName>
    </alternativeName>
    <alternativeName>
        <fullName evidence="2">RING-type E3 ubiquitin transferase PUB43</fullName>
    </alternativeName>
</protein>
<evidence type="ECO:0000250" key="1"/>
<evidence type="ECO:0000305" key="2"/>
<reference key="1">
    <citation type="journal article" date="2000" name="Nature">
        <title>Sequence and analysis of chromosome 1 of the plant Arabidopsis thaliana.</title>
        <authorList>
            <person name="Theologis A."/>
            <person name="Ecker J.R."/>
            <person name="Palm C.J."/>
            <person name="Federspiel N.A."/>
            <person name="Kaul S."/>
            <person name="White O."/>
            <person name="Alonso J."/>
            <person name="Altafi H."/>
            <person name="Araujo R."/>
            <person name="Bowman C.L."/>
            <person name="Brooks S.Y."/>
            <person name="Buehler E."/>
            <person name="Chan A."/>
            <person name="Chao Q."/>
            <person name="Chen H."/>
            <person name="Cheuk R.F."/>
            <person name="Chin C.W."/>
            <person name="Chung M.K."/>
            <person name="Conn L."/>
            <person name="Conway A.B."/>
            <person name="Conway A.R."/>
            <person name="Creasy T.H."/>
            <person name="Dewar K."/>
            <person name="Dunn P."/>
            <person name="Etgu P."/>
            <person name="Feldblyum T.V."/>
            <person name="Feng J.-D."/>
            <person name="Fong B."/>
            <person name="Fujii C.Y."/>
            <person name="Gill J.E."/>
            <person name="Goldsmith A.D."/>
            <person name="Haas B."/>
            <person name="Hansen N.F."/>
            <person name="Hughes B."/>
            <person name="Huizar L."/>
            <person name="Hunter J.L."/>
            <person name="Jenkins J."/>
            <person name="Johnson-Hopson C."/>
            <person name="Khan S."/>
            <person name="Khaykin E."/>
            <person name="Kim C.J."/>
            <person name="Koo H.L."/>
            <person name="Kremenetskaia I."/>
            <person name="Kurtz D.B."/>
            <person name="Kwan A."/>
            <person name="Lam B."/>
            <person name="Langin-Hooper S."/>
            <person name="Lee A."/>
            <person name="Lee J.M."/>
            <person name="Lenz C.A."/>
            <person name="Li J.H."/>
            <person name="Li Y.-P."/>
            <person name="Lin X."/>
            <person name="Liu S.X."/>
            <person name="Liu Z.A."/>
            <person name="Luros J.S."/>
            <person name="Maiti R."/>
            <person name="Marziali A."/>
            <person name="Militscher J."/>
            <person name="Miranda M."/>
            <person name="Nguyen M."/>
            <person name="Nierman W.C."/>
            <person name="Osborne B.I."/>
            <person name="Pai G."/>
            <person name="Peterson J."/>
            <person name="Pham P.K."/>
            <person name="Rizzo M."/>
            <person name="Rooney T."/>
            <person name="Rowley D."/>
            <person name="Sakano H."/>
            <person name="Salzberg S.L."/>
            <person name="Schwartz J.R."/>
            <person name="Shinn P."/>
            <person name="Southwick A.M."/>
            <person name="Sun H."/>
            <person name="Tallon L.J."/>
            <person name="Tambunga G."/>
            <person name="Toriumi M.J."/>
            <person name="Town C.D."/>
            <person name="Utterback T."/>
            <person name="Van Aken S."/>
            <person name="Vaysberg M."/>
            <person name="Vysotskaia V.S."/>
            <person name="Walker M."/>
            <person name="Wu D."/>
            <person name="Yu G."/>
            <person name="Fraser C.M."/>
            <person name="Venter J.C."/>
            <person name="Davis R.W."/>
        </authorList>
    </citation>
    <scope>NUCLEOTIDE SEQUENCE [LARGE SCALE GENOMIC DNA]</scope>
    <source>
        <strain>cv. Columbia</strain>
    </source>
</reference>
<reference key="2">
    <citation type="journal article" date="2017" name="Plant J.">
        <title>Araport11: a complete reannotation of the Arabidopsis thaliana reference genome.</title>
        <authorList>
            <person name="Cheng C.Y."/>
            <person name="Krishnakumar V."/>
            <person name="Chan A.P."/>
            <person name="Thibaud-Nissen F."/>
            <person name="Schobel S."/>
            <person name="Town C.D."/>
        </authorList>
    </citation>
    <scope>GENOME REANNOTATION</scope>
    <source>
        <strain>cv. Columbia</strain>
    </source>
</reference>
<reference key="3">
    <citation type="submission" date="2006-07" db="EMBL/GenBank/DDBJ databases">
        <title>Large-scale analysis of RIKEN Arabidopsis full-length (RAFL) cDNAs.</title>
        <authorList>
            <person name="Totoki Y."/>
            <person name="Seki M."/>
            <person name="Ishida J."/>
            <person name="Nakajima M."/>
            <person name="Enju A."/>
            <person name="Kamiya A."/>
            <person name="Narusaka M."/>
            <person name="Shin-i T."/>
            <person name="Nakagawa M."/>
            <person name="Sakamoto N."/>
            <person name="Oishi K."/>
            <person name="Kohara Y."/>
            <person name="Kobayashi M."/>
            <person name="Toyoda A."/>
            <person name="Sakaki Y."/>
            <person name="Sakurai T."/>
            <person name="Iida K."/>
            <person name="Akiyama K."/>
            <person name="Satou M."/>
            <person name="Toyoda T."/>
            <person name="Konagaya A."/>
            <person name="Carninci P."/>
            <person name="Kawai J."/>
            <person name="Hayashizaki Y."/>
            <person name="Shinozaki K."/>
        </authorList>
    </citation>
    <scope>NUCLEOTIDE SEQUENCE [LARGE SCALE MRNA]</scope>
    <source>
        <strain>cv. Columbia</strain>
    </source>
</reference>
<reference key="4">
    <citation type="journal article" date="2004" name="Plant Physiol.">
        <title>A large complement of the predicted Arabidopsis ARM repeat proteins are members of the U-box E3 ubiquitin ligase family.</title>
        <authorList>
            <person name="Mudgil Y."/>
            <person name="Shiu S.-H."/>
            <person name="Stone S.L."/>
            <person name="Salt J.N."/>
            <person name="Goring D.R."/>
        </authorList>
    </citation>
    <scope>GENE FAMILY ORGANIZATION</scope>
</reference>